<feature type="chain" id="PRO_1000082762" description="UPF0246 protein Caul_4480">
    <location>
        <begin position="1"/>
        <end position="255"/>
    </location>
</feature>
<dbReference type="EMBL" id="CP000927">
    <property type="protein sequence ID" value="ABZ73600.1"/>
    <property type="molecule type" value="Genomic_DNA"/>
</dbReference>
<dbReference type="SMR" id="B0T0V2"/>
<dbReference type="STRING" id="366602.Caul_4480"/>
<dbReference type="KEGG" id="cak:Caul_4480"/>
<dbReference type="eggNOG" id="COG3022">
    <property type="taxonomic scope" value="Bacteria"/>
</dbReference>
<dbReference type="HOGENOM" id="CLU_061989_0_0_5"/>
<dbReference type="OrthoDB" id="9777133at2"/>
<dbReference type="GO" id="GO:0005829">
    <property type="term" value="C:cytosol"/>
    <property type="evidence" value="ECO:0007669"/>
    <property type="project" value="TreeGrafter"/>
</dbReference>
<dbReference type="GO" id="GO:0033194">
    <property type="term" value="P:response to hydroperoxide"/>
    <property type="evidence" value="ECO:0007669"/>
    <property type="project" value="TreeGrafter"/>
</dbReference>
<dbReference type="HAMAP" id="MF_00652">
    <property type="entry name" value="UPF0246"/>
    <property type="match status" value="1"/>
</dbReference>
<dbReference type="InterPro" id="IPR005583">
    <property type="entry name" value="YaaA"/>
</dbReference>
<dbReference type="NCBIfam" id="NF002542">
    <property type="entry name" value="PRK02101.1-3"/>
    <property type="match status" value="1"/>
</dbReference>
<dbReference type="PANTHER" id="PTHR30283:SF4">
    <property type="entry name" value="PEROXIDE STRESS RESISTANCE PROTEIN YAAA"/>
    <property type="match status" value="1"/>
</dbReference>
<dbReference type="PANTHER" id="PTHR30283">
    <property type="entry name" value="PEROXIDE STRESS RESPONSE PROTEIN YAAA"/>
    <property type="match status" value="1"/>
</dbReference>
<dbReference type="Pfam" id="PF03883">
    <property type="entry name" value="H2O2_YaaD"/>
    <property type="match status" value="1"/>
</dbReference>
<organism>
    <name type="scientific">Caulobacter sp. (strain K31)</name>
    <dbReference type="NCBI Taxonomy" id="366602"/>
    <lineage>
        <taxon>Bacteria</taxon>
        <taxon>Pseudomonadati</taxon>
        <taxon>Pseudomonadota</taxon>
        <taxon>Alphaproteobacteria</taxon>
        <taxon>Caulobacterales</taxon>
        <taxon>Caulobacteraceae</taxon>
        <taxon>Caulobacter</taxon>
    </lineage>
</organism>
<accession>B0T0V2</accession>
<reference key="1">
    <citation type="submission" date="2008-01" db="EMBL/GenBank/DDBJ databases">
        <title>Complete sequence of chromosome of Caulobacter sp. K31.</title>
        <authorList>
            <consortium name="US DOE Joint Genome Institute"/>
            <person name="Copeland A."/>
            <person name="Lucas S."/>
            <person name="Lapidus A."/>
            <person name="Barry K."/>
            <person name="Glavina del Rio T."/>
            <person name="Dalin E."/>
            <person name="Tice H."/>
            <person name="Pitluck S."/>
            <person name="Bruce D."/>
            <person name="Goodwin L."/>
            <person name="Thompson L.S."/>
            <person name="Brettin T."/>
            <person name="Detter J.C."/>
            <person name="Han C."/>
            <person name="Schmutz J."/>
            <person name="Larimer F."/>
            <person name="Land M."/>
            <person name="Hauser L."/>
            <person name="Kyrpides N."/>
            <person name="Kim E."/>
            <person name="Stephens C."/>
            <person name="Richardson P."/>
        </authorList>
    </citation>
    <scope>NUCLEOTIDE SEQUENCE [LARGE SCALE GENOMIC DNA]</scope>
    <source>
        <strain>K31</strain>
    </source>
</reference>
<name>Y4480_CAUSK</name>
<gene>
    <name type="ordered locus">Caul_4480</name>
</gene>
<proteinExistence type="inferred from homology"/>
<comment type="similarity">
    <text evidence="1">Belongs to the UPF0246 family.</text>
</comment>
<evidence type="ECO:0000255" key="1">
    <source>
        <dbReference type="HAMAP-Rule" id="MF_00652"/>
    </source>
</evidence>
<sequence length="255" mass="28550">MLMVISPAKSLDFTAPDQVLPLTTPELKPQIAELAKVTRKLTAADLRRLMHISEKLAALNHERFQHFDPQVEEGLQAVIAFNGDVYAGLNARELDRPALEWAQDHLRILSGLYGVLRPFDALQAYRLEMGARLKTKRGANLYDFWGETIAKTLNAAGKDHADPTLVNLASQEYFGAVDAKALKLPVVTCHFKEEKGNTLRVLGFFAKKARGRMARFAIDNRIDKAEGLKGFNLDGYEYRADLSTPADWVFARLQP</sequence>
<protein>
    <recommendedName>
        <fullName evidence="1">UPF0246 protein Caul_4480</fullName>
    </recommendedName>
</protein>